<keyword id="KW-0175">Coiled coil</keyword>
<keyword id="KW-1185">Reference proteome</keyword>
<keyword id="KW-1171">Viral genome ejection through host cell envelope</keyword>
<keyword id="KW-1243">Viral long flexible tail ejection system</keyword>
<keyword id="KW-1162">Viral penetration into host cytoplasm</keyword>
<keyword id="KW-1188">Viral release from host cell</keyword>
<keyword id="KW-1245">Viral tail assembly</keyword>
<keyword id="KW-1227">Viral tail protein</keyword>
<keyword id="KW-0946">Virion</keyword>
<keyword id="KW-1160">Virus entry into host cell</keyword>
<dbReference type="EMBL" id="AF064539">
    <property type="protein sequence ID" value="AAC19052.1"/>
    <property type="molecule type" value="Genomic_DNA"/>
</dbReference>
<dbReference type="PIR" id="T13102">
    <property type="entry name" value="T13102"/>
</dbReference>
<dbReference type="RefSeq" id="NP_046911.1">
    <property type="nucleotide sequence ID" value="NC_001901.1"/>
</dbReference>
<dbReference type="SMR" id="O64330"/>
<dbReference type="GeneID" id="1261655"/>
<dbReference type="KEGG" id="vg:1261655"/>
<dbReference type="Proteomes" id="UP000002132">
    <property type="component" value="Genome"/>
</dbReference>
<dbReference type="GO" id="GO:0098015">
    <property type="term" value="C:virus tail"/>
    <property type="evidence" value="ECO:0007669"/>
    <property type="project" value="UniProtKB-UniRule"/>
</dbReference>
<dbReference type="GO" id="GO:0099001">
    <property type="term" value="P:symbiont genome ejection through host cell envelope, long flexible tail mechanism"/>
    <property type="evidence" value="ECO:0007669"/>
    <property type="project" value="UniProtKB-KW"/>
</dbReference>
<dbReference type="GO" id="GO:0098003">
    <property type="term" value="P:viral tail assembly"/>
    <property type="evidence" value="ECO:0007669"/>
    <property type="project" value="UniProtKB-UniRule"/>
</dbReference>
<dbReference type="HAMAP" id="MF_04138">
    <property type="entry name" value="TMP_LAMBDA"/>
    <property type="match status" value="1"/>
</dbReference>
<dbReference type="InterPro" id="IPR043680">
    <property type="entry name" value="GpH_LAMBDA"/>
</dbReference>
<dbReference type="InterPro" id="IPR006431">
    <property type="entry name" value="Phage_tape_meas_C"/>
</dbReference>
<dbReference type="InterPro" id="IPR009628">
    <property type="entry name" value="Phage_tape_measure_N"/>
</dbReference>
<dbReference type="NCBIfam" id="TIGR01541">
    <property type="entry name" value="tape_meas_lam_C"/>
    <property type="match status" value="1"/>
</dbReference>
<dbReference type="Pfam" id="PF09718">
    <property type="entry name" value="Tape_meas_lam_C"/>
    <property type="match status" value="1"/>
</dbReference>
<dbReference type="Pfam" id="PF06791">
    <property type="entry name" value="TMP_2"/>
    <property type="match status" value="1"/>
</dbReference>
<proteinExistence type="inferred from homology"/>
<sequence length="838" mass="90349">MAQTAVGDLVVNLDVNSTKFNEQLSYVKKELKQTGNTANDEALRIQQSFSRQENAARKAGISVGQYNAAMRMLPAQFTDVATQLAGGQNPWLILLQQGGQVKDSFGGIIPTFRALLGTISPLMVGIGALSVATGALFYAWYQGSSTLSDFNKTLVLSGNTAGLTADRMLALARNGQAAGLTFNQTSEALTELINAGVRTGSRFDEMSQAVARFTDASGVPVEKVAAAYGKLATDPTSGLIAMAQQFHNVTAEQIAHVAQLQRAGDEAGALQAANEAATAGFNDQTKAIRDNMGTIESSADSLKRAFKSMWDAALDIGRPDTAQEMVAKAEAAFKKADEIWNLRKGDRYVNDEARARFWNDRETARLALDMAQQQAGIARANEENASREAAAESDRQKYAAQAQANYAKTQTALEKYTARQSELNKALKEGRILQADYNINLAAAKKEYEDTLKKPKKTPAIRTPAGARATDTASAQTLELQAQLRTLQEHKSINDTISQQRQELWRQQSRFTVLEEAAKTRTLSAEEKSLLASKSEVLSRAELNAKLGDQIVAQERLNRLQDTSQKYVTQIGEKTRALAESAGMSSRAAQRRNEEAQLLQGWKNGGGSENDAGYQNELQALQAYYAEQDKLRDDWQSGAKSAWADYVDSASDAYGQMKSFATSTFDGIGQNMADMLTRGKADWADFTRSTLSMLTQILLKQAMVGLVDSATTALGFAGGGYTGSGGKYEPAGVVHRGEFVFTKEATNRIGVGNLYRMMKGYATGGYVGGGGTGPAAAPFGVSVYAPVTVENASGNAQQQNDGDRLGKAYQQVINKSVNDGIARAIQPGGLIWNATNRR</sequence>
<comment type="function">
    <text evidence="1">Serves as a ruler that controls the length of tail by stopping the tail tube polymerization and is probably released from the tail shaft during infection to facilitate DNA translocation into the host cell. Assembles into a multimeric linear form probably arranged as a coil of alpha-helices and stabilized by the covering tail assembly proteins. Its C-terminus fixes the tail tip complex, thereby forming the tail assembly initiator complex. Tail tube proteins polymerize around the tape measure protein, displacing the tail assembly proteins. When the tail reaches the length specified by the tape measure protein, it stops and becomes capped by the tail terminator protein.</text>
</comment>
<comment type="subunit">
    <text evidence="1">Interacts with the tail initiator complex presumably through its C-terminus domain. Interacts with the tail assembly proteins.</text>
</comment>
<comment type="subcellular location">
    <subcellularLocation>
        <location evidence="1">Virion</location>
    </subcellularLocation>
</comment>
<comment type="similarity">
    <text evidence="1">Belongs to the Lambdavirus tape measure protein family.</text>
</comment>
<accession>O64330</accession>
<organismHost>
    <name type="scientific">Escherichia coli</name>
    <dbReference type="NCBI Taxonomy" id="562"/>
</organismHost>
<name>TMP_BPN15</name>
<protein>
    <recommendedName>
        <fullName evidence="1">Tape measure protein</fullName>
        <shortName evidence="1">TMP</shortName>
    </recommendedName>
    <alternativeName>
        <fullName evidence="3">Gene product 16</fullName>
        <shortName>gp16</shortName>
    </alternativeName>
</protein>
<gene>
    <name evidence="4" type="primary">gene 16</name>
</gene>
<feature type="chain" id="PRO_0000431939" description="Tape measure protein" evidence="1">
    <location>
        <begin position="1"/>
        <end position="838"/>
    </location>
</feature>
<feature type="region of interest" description="Disordered" evidence="2">
    <location>
        <begin position="378"/>
        <end position="397"/>
    </location>
</feature>
<feature type="coiled-coil region" evidence="1">
    <location>
        <begin position="399"/>
        <end position="419"/>
    </location>
</feature>
<feature type="compositionally biased region" description="Basic and acidic residues" evidence="2">
    <location>
        <begin position="380"/>
        <end position="397"/>
    </location>
</feature>
<evidence type="ECO:0000255" key="1">
    <source>
        <dbReference type="HAMAP-Rule" id="MF_04138"/>
    </source>
</evidence>
<evidence type="ECO:0000256" key="2">
    <source>
        <dbReference type="SAM" id="MobiDB-lite"/>
    </source>
</evidence>
<evidence type="ECO:0000305" key="3"/>
<evidence type="ECO:0000312" key="4">
    <source>
        <dbReference type="EMBL" id="AAC19052.1"/>
    </source>
</evidence>
<evidence type="ECO:0000312" key="5">
    <source>
        <dbReference type="Proteomes" id="UP000002132"/>
    </source>
</evidence>
<organism evidence="5">
    <name type="scientific">Escherichia phage N15</name>
    <name type="common">Bacteriophage N15</name>
    <dbReference type="NCBI Taxonomy" id="1604876"/>
    <lineage>
        <taxon>Viruses</taxon>
        <taxon>Duplodnaviria</taxon>
        <taxon>Heunggongvirae</taxon>
        <taxon>Uroviricota</taxon>
        <taxon>Caudoviricetes</taxon>
        <taxon>Ravinvirus</taxon>
        <taxon>Ravinvirus N15</taxon>
    </lineage>
</organism>
<reference key="1">
    <citation type="journal article" date="1996" name="J. Bacteriol.">
        <title>Characterization of the primary immunity region of the Escherichia coli linear plasmid prophage N15.</title>
        <authorList>
            <person name="Lobocka M.B."/>
            <person name="Svarchevsky A.N."/>
            <person name="Rybchin V.N."/>
            <person name="Yarmolinsky M.B."/>
        </authorList>
    </citation>
    <scope>NUCLEOTIDE SEQUENCE [GENOMIC DNA]</scope>
</reference>
<reference key="2">
    <citation type="journal article" date="1996" name="J. Bacteriol.">
        <title>Proteins responsible for lysogenic conversion caused by coliphages N15 and phi80 are highly homologous.</title>
        <authorList>
            <person name="Vostrov A.A."/>
            <person name="Vostrukhina O.A."/>
            <person name="Svarchevsky A.N."/>
            <person name="Rybchin V.N."/>
        </authorList>
    </citation>
    <scope>NUCLEOTIDE SEQUENCE [LARGE SCALE GENOMIC DNA]</scope>
</reference>